<reference key="1">
    <citation type="journal article" date="2002" name="Lancet">
        <title>Genome and virulence determinants of high virulence community-acquired MRSA.</title>
        <authorList>
            <person name="Baba T."/>
            <person name="Takeuchi F."/>
            <person name="Kuroda M."/>
            <person name="Yuzawa H."/>
            <person name="Aoki K."/>
            <person name="Oguchi A."/>
            <person name="Nagai Y."/>
            <person name="Iwama N."/>
            <person name="Asano K."/>
            <person name="Naimi T."/>
            <person name="Kuroda H."/>
            <person name="Cui L."/>
            <person name="Yamamoto K."/>
            <person name="Hiramatsu K."/>
        </authorList>
    </citation>
    <scope>NUCLEOTIDE SEQUENCE [LARGE SCALE GENOMIC DNA]</scope>
    <source>
        <strain>MW2</strain>
    </source>
</reference>
<protein>
    <recommendedName>
        <fullName>Uncharacterized protein MW2548</fullName>
    </recommendedName>
</protein>
<sequence>MKKLAVILTLVGGLYFAFKKYQERVNQAPNIEY</sequence>
<dbReference type="EMBL" id="BA000033">
    <property type="protein sequence ID" value="BAB96413.1"/>
    <property type="molecule type" value="Genomic_DNA"/>
</dbReference>
<dbReference type="SMR" id="Q8NUL1"/>
<dbReference type="KEGG" id="sam:MW2548"/>
<dbReference type="HOGENOM" id="CLU_217298_1_0_9"/>
<dbReference type="NCBIfam" id="NF040843">
    <property type="entry name" value="SE2200_fam"/>
    <property type="match status" value="1"/>
</dbReference>
<feature type="chain" id="PRO_0000215538" description="Uncharacterized protein MW2548">
    <location>
        <begin position="1"/>
        <end position="33"/>
    </location>
</feature>
<name>Y2548_STAAW</name>
<accession>Q8NUL1</accession>
<proteinExistence type="predicted"/>
<organism>
    <name type="scientific">Staphylococcus aureus (strain MW2)</name>
    <dbReference type="NCBI Taxonomy" id="196620"/>
    <lineage>
        <taxon>Bacteria</taxon>
        <taxon>Bacillati</taxon>
        <taxon>Bacillota</taxon>
        <taxon>Bacilli</taxon>
        <taxon>Bacillales</taxon>
        <taxon>Staphylococcaceae</taxon>
        <taxon>Staphylococcus</taxon>
    </lineage>
</organism>
<gene>
    <name type="ordered locus">MW2548</name>
</gene>